<proteinExistence type="inferred from homology"/>
<accession>A2XWN6</accession>
<comment type="function">
    <text evidence="1 2">Plays a key role in early steps of protein N-linked glycosylation by being involved in the conversion of polyprenol into dolichol (By similarity). Acts as a polyprenal reductase that mediates the reduction of polyprenal into dolichal in a NADP-dependent mechanism (By similarity). Dolichols are required for the synthesis of dolichol-linked monosaccharides and the oligosaccharide precursor used for N-glycosylation (By similarity).</text>
</comment>
<comment type="catalytic activity">
    <reaction evidence="2">
        <text>a di-trans,poly-cis-dolichal + NADP(+) = a di-trans,poly-cis-polyprenal + NADPH + H(+)</text>
        <dbReference type="Rhea" id="RHEA:80727"/>
        <dbReference type="Rhea" id="RHEA-COMP:19536"/>
        <dbReference type="Rhea" id="RHEA-COMP:19537"/>
        <dbReference type="ChEBI" id="CHEBI:15378"/>
        <dbReference type="ChEBI" id="CHEBI:57783"/>
        <dbReference type="ChEBI" id="CHEBI:58349"/>
        <dbReference type="ChEBI" id="CHEBI:231623"/>
        <dbReference type="ChEBI" id="CHEBI:231637"/>
        <dbReference type="EC" id="1.3.1.94"/>
    </reaction>
    <physiologicalReaction direction="right-to-left" evidence="2">
        <dbReference type="Rhea" id="RHEA:80729"/>
    </physiologicalReaction>
</comment>
<comment type="pathway">
    <text evidence="1">Protein modification; protein glycosylation.</text>
</comment>
<comment type="subcellular location">
    <subcellularLocation>
        <location evidence="1">Cell membrane</location>
        <topology evidence="3">Multi-pass membrane protein</topology>
    </subcellularLocation>
</comment>
<comment type="similarity">
    <text evidence="4">Belongs to the steroid 5-alpha reductase family. Polyprenal reductase subfamily.</text>
</comment>
<keyword id="KW-1003">Cell membrane</keyword>
<keyword id="KW-0472">Membrane</keyword>
<keyword id="KW-0521">NADP</keyword>
<keyword id="KW-0560">Oxidoreductase</keyword>
<keyword id="KW-1185">Reference proteome</keyword>
<keyword id="KW-0812">Transmembrane</keyword>
<keyword id="KW-1133">Transmembrane helix</keyword>
<name>PPRD1_ORYSI</name>
<protein>
    <recommendedName>
        <fullName evidence="4">Polyprenal reductase 1</fullName>
        <ecNumber evidence="2">1.3.1.94</ecNumber>
    </recommendedName>
</protein>
<reference key="1">
    <citation type="journal article" date="2005" name="PLoS Biol.">
        <title>The genomes of Oryza sativa: a history of duplications.</title>
        <authorList>
            <person name="Yu J."/>
            <person name="Wang J."/>
            <person name="Lin W."/>
            <person name="Li S."/>
            <person name="Li H."/>
            <person name="Zhou J."/>
            <person name="Ni P."/>
            <person name="Dong W."/>
            <person name="Hu S."/>
            <person name="Zeng C."/>
            <person name="Zhang J."/>
            <person name="Zhang Y."/>
            <person name="Li R."/>
            <person name="Xu Z."/>
            <person name="Li S."/>
            <person name="Li X."/>
            <person name="Zheng H."/>
            <person name="Cong L."/>
            <person name="Lin L."/>
            <person name="Yin J."/>
            <person name="Geng J."/>
            <person name="Li G."/>
            <person name="Shi J."/>
            <person name="Liu J."/>
            <person name="Lv H."/>
            <person name="Li J."/>
            <person name="Wang J."/>
            <person name="Deng Y."/>
            <person name="Ran L."/>
            <person name="Shi X."/>
            <person name="Wang X."/>
            <person name="Wu Q."/>
            <person name="Li C."/>
            <person name="Ren X."/>
            <person name="Wang J."/>
            <person name="Wang X."/>
            <person name="Li D."/>
            <person name="Liu D."/>
            <person name="Zhang X."/>
            <person name="Ji Z."/>
            <person name="Zhao W."/>
            <person name="Sun Y."/>
            <person name="Zhang Z."/>
            <person name="Bao J."/>
            <person name="Han Y."/>
            <person name="Dong L."/>
            <person name="Ji J."/>
            <person name="Chen P."/>
            <person name="Wu S."/>
            <person name="Liu J."/>
            <person name="Xiao Y."/>
            <person name="Bu D."/>
            <person name="Tan J."/>
            <person name="Yang L."/>
            <person name="Ye C."/>
            <person name="Zhang J."/>
            <person name="Xu J."/>
            <person name="Zhou Y."/>
            <person name="Yu Y."/>
            <person name="Zhang B."/>
            <person name="Zhuang S."/>
            <person name="Wei H."/>
            <person name="Liu B."/>
            <person name="Lei M."/>
            <person name="Yu H."/>
            <person name="Li Y."/>
            <person name="Xu H."/>
            <person name="Wei S."/>
            <person name="He X."/>
            <person name="Fang L."/>
            <person name="Zhang Z."/>
            <person name="Zhang Y."/>
            <person name="Huang X."/>
            <person name="Su Z."/>
            <person name="Tong W."/>
            <person name="Li J."/>
            <person name="Tong Z."/>
            <person name="Li S."/>
            <person name="Ye J."/>
            <person name="Wang L."/>
            <person name="Fang L."/>
            <person name="Lei T."/>
            <person name="Chen C.-S."/>
            <person name="Chen H.-C."/>
            <person name="Xu Z."/>
            <person name="Li H."/>
            <person name="Huang H."/>
            <person name="Zhang F."/>
            <person name="Xu H."/>
            <person name="Li N."/>
            <person name="Zhao C."/>
            <person name="Li S."/>
            <person name="Dong L."/>
            <person name="Huang Y."/>
            <person name="Li L."/>
            <person name="Xi Y."/>
            <person name="Qi Q."/>
            <person name="Li W."/>
            <person name="Zhang B."/>
            <person name="Hu W."/>
            <person name="Zhang Y."/>
            <person name="Tian X."/>
            <person name="Jiao Y."/>
            <person name="Liang X."/>
            <person name="Jin J."/>
            <person name="Gao L."/>
            <person name="Zheng W."/>
            <person name="Hao B."/>
            <person name="Liu S.-M."/>
            <person name="Wang W."/>
            <person name="Yuan L."/>
            <person name="Cao M."/>
            <person name="McDermott J."/>
            <person name="Samudrala R."/>
            <person name="Wang J."/>
            <person name="Wong G.K.-S."/>
            <person name="Yang H."/>
        </authorList>
    </citation>
    <scope>NUCLEOTIDE SEQUENCE [LARGE SCALE GENOMIC DNA]</scope>
    <source>
        <strain>cv. 93-11</strain>
    </source>
</reference>
<gene>
    <name type="ORF">OsI_17065</name>
</gene>
<sequence>METEGWPALQPLLCLAWIATTLPIIVAALPIPAAAGGHLLRRLLSAFSSRGKTVRPSPASSSGSSSSKAKFTVPQKYFMHFYVVGVLATTILLLAIWFYAYMKMTPLLPESSSYSTIASHLVGSNSFSFGRVHSRTMGHKYHVWRTVFVLLLMEIQVLRRLYETEHVFHYSPSARMHIVGYLTGLFYYVAAPLSLASSCIPEAAEYLQGQVAEFIVKGRARMPDLVIDSSSLLQPLLKLGWTQWIGAVIFIWGSLHQIRCHAILGTLREHKDSDEYVIPCGDWFNRVSCPHYLAELVIYFGMLVASGGEDIPVWFLFVFVITNLSFAAVETHKWYLQKFEDYPRSRYAIIPFVC</sequence>
<evidence type="ECO:0000250" key="1">
    <source>
        <dbReference type="UniProtKB" id="Q9CAH5"/>
    </source>
</evidence>
<evidence type="ECO:0000250" key="2">
    <source>
        <dbReference type="UniProtKB" id="Q9H8P0"/>
    </source>
</evidence>
<evidence type="ECO:0000255" key="3"/>
<evidence type="ECO:0000305" key="4"/>
<feature type="chain" id="PRO_0000398658" description="Polyprenal reductase 1">
    <location>
        <begin position="1"/>
        <end position="354"/>
    </location>
</feature>
<feature type="transmembrane region" description="Helical" evidence="3">
    <location>
        <begin position="11"/>
        <end position="31"/>
    </location>
</feature>
<feature type="transmembrane region" description="Helical" evidence="3">
    <location>
        <begin position="78"/>
        <end position="98"/>
    </location>
</feature>
<feature type="transmembrane region" description="Helical" evidence="3">
    <location>
        <begin position="141"/>
        <end position="158"/>
    </location>
</feature>
<feature type="transmembrane region" description="Helical" evidence="3">
    <location>
        <begin position="176"/>
        <end position="196"/>
    </location>
</feature>
<feature type="transmembrane region" description="Helical" evidence="3">
    <location>
        <begin position="235"/>
        <end position="255"/>
    </location>
</feature>
<feature type="transmembrane region" description="Helical" evidence="3">
    <location>
        <begin position="301"/>
        <end position="321"/>
    </location>
</feature>
<organism>
    <name type="scientific">Oryza sativa subsp. indica</name>
    <name type="common">Rice</name>
    <dbReference type="NCBI Taxonomy" id="39946"/>
    <lineage>
        <taxon>Eukaryota</taxon>
        <taxon>Viridiplantae</taxon>
        <taxon>Streptophyta</taxon>
        <taxon>Embryophyta</taxon>
        <taxon>Tracheophyta</taxon>
        <taxon>Spermatophyta</taxon>
        <taxon>Magnoliopsida</taxon>
        <taxon>Liliopsida</taxon>
        <taxon>Poales</taxon>
        <taxon>Poaceae</taxon>
        <taxon>BOP clade</taxon>
        <taxon>Oryzoideae</taxon>
        <taxon>Oryzeae</taxon>
        <taxon>Oryzinae</taxon>
        <taxon>Oryza</taxon>
        <taxon>Oryza sativa</taxon>
    </lineage>
</organism>
<dbReference type="EC" id="1.3.1.94" evidence="2"/>
<dbReference type="EMBL" id="CM000129">
    <property type="protein sequence ID" value="EAY95246.1"/>
    <property type="molecule type" value="Genomic_DNA"/>
</dbReference>
<dbReference type="SMR" id="A2XWN6"/>
<dbReference type="STRING" id="39946.A2XWN6"/>
<dbReference type="EnsemblPlants" id="BGIOSGA016966-TA">
    <property type="protein sequence ID" value="BGIOSGA016966-PA"/>
    <property type="gene ID" value="BGIOSGA016966"/>
</dbReference>
<dbReference type="EnsemblPlants" id="OsGoSa_04g0023470.02">
    <property type="protein sequence ID" value="OsGoSa_04g0023470.02"/>
    <property type="gene ID" value="OsGoSa_04g0023470"/>
</dbReference>
<dbReference type="EnsemblPlants" id="OsIR64_04g0023030.02">
    <property type="protein sequence ID" value="OsIR64_04g0023030.02"/>
    <property type="gene ID" value="OsIR64_04g0023030"/>
</dbReference>
<dbReference type="EnsemblPlants" id="OsKYG_04g0023340.01">
    <property type="protein sequence ID" value="OsKYG_04g0023340.01"/>
    <property type="gene ID" value="OsKYG_04g0023340"/>
</dbReference>
<dbReference type="EnsemblPlants" id="OsKYG_04g0023340.02">
    <property type="protein sequence ID" value="OsKYG_04g0023340.02"/>
    <property type="gene ID" value="OsKYG_04g0023340"/>
</dbReference>
<dbReference type="EnsemblPlants" id="OsLaMu_04g0024070.02">
    <property type="protein sequence ID" value="OsLaMu_04g0024070.02"/>
    <property type="gene ID" value="OsLaMu_04g0024070"/>
</dbReference>
<dbReference type="EnsemblPlants" id="OsLima_04g0023500.01">
    <property type="protein sequence ID" value="OsLima_04g0023500.01"/>
    <property type="gene ID" value="OsLima_04g0023500"/>
</dbReference>
<dbReference type="EnsemblPlants" id="OsLima_04g0023500.02">
    <property type="protein sequence ID" value="OsLima_04g0023500.02"/>
    <property type="gene ID" value="OsLima_04g0023500"/>
</dbReference>
<dbReference type="EnsemblPlants" id="OsLiXu_04g0023860.01">
    <property type="protein sequence ID" value="OsLiXu_04g0023860.01"/>
    <property type="gene ID" value="OsLiXu_04g0023860"/>
</dbReference>
<dbReference type="EnsemblPlants" id="OsMH63_04G024380_02">
    <property type="protein sequence ID" value="OsMH63_04G024380_02"/>
    <property type="gene ID" value="OsMH63_04G024380"/>
</dbReference>
<dbReference type="EnsemblPlants" id="OsPr106_04g0024220.01">
    <property type="protein sequence ID" value="OsPr106_04g0024220.01"/>
    <property type="gene ID" value="OsPr106_04g0024220"/>
</dbReference>
<dbReference type="EnsemblPlants" id="OsZS97_04G024410_01">
    <property type="protein sequence ID" value="OsZS97_04G024410_01"/>
    <property type="gene ID" value="OsZS97_04G024410"/>
</dbReference>
<dbReference type="Gramene" id="BGIOSGA016966-TA">
    <property type="protein sequence ID" value="BGIOSGA016966-PA"/>
    <property type="gene ID" value="BGIOSGA016966"/>
</dbReference>
<dbReference type="Gramene" id="OsGoSa_04g0023470.02">
    <property type="protein sequence ID" value="OsGoSa_04g0023470.02"/>
    <property type="gene ID" value="OsGoSa_04g0023470"/>
</dbReference>
<dbReference type="Gramene" id="OsIR64_04g0023030.02">
    <property type="protein sequence ID" value="OsIR64_04g0023030.02"/>
    <property type="gene ID" value="OsIR64_04g0023030"/>
</dbReference>
<dbReference type="Gramene" id="OsKYG_04g0023340.01">
    <property type="protein sequence ID" value="OsKYG_04g0023340.01"/>
    <property type="gene ID" value="OsKYG_04g0023340"/>
</dbReference>
<dbReference type="Gramene" id="OsKYG_04g0023340.02">
    <property type="protein sequence ID" value="OsKYG_04g0023340.02"/>
    <property type="gene ID" value="OsKYG_04g0023340"/>
</dbReference>
<dbReference type="Gramene" id="OsLaMu_04g0024070.02">
    <property type="protein sequence ID" value="OsLaMu_04g0024070.02"/>
    <property type="gene ID" value="OsLaMu_04g0024070"/>
</dbReference>
<dbReference type="Gramene" id="OsLima_04g0023500.01">
    <property type="protein sequence ID" value="OsLima_04g0023500.01"/>
    <property type="gene ID" value="OsLima_04g0023500"/>
</dbReference>
<dbReference type="Gramene" id="OsLima_04g0023500.02">
    <property type="protein sequence ID" value="OsLima_04g0023500.02"/>
    <property type="gene ID" value="OsLima_04g0023500"/>
</dbReference>
<dbReference type="Gramene" id="OsLiXu_04g0023860.01">
    <property type="protein sequence ID" value="OsLiXu_04g0023860.01"/>
    <property type="gene ID" value="OsLiXu_04g0023860"/>
</dbReference>
<dbReference type="Gramene" id="OsMH63_04G024380_02">
    <property type="protein sequence ID" value="OsMH63_04G024380_02"/>
    <property type="gene ID" value="OsMH63_04G024380"/>
</dbReference>
<dbReference type="Gramene" id="OsPr106_04g0024220.01">
    <property type="protein sequence ID" value="OsPr106_04g0024220.01"/>
    <property type="gene ID" value="OsPr106_04g0024220"/>
</dbReference>
<dbReference type="Gramene" id="OsZS97_04G024410_01">
    <property type="protein sequence ID" value="OsZS97_04G024410_01"/>
    <property type="gene ID" value="OsZS97_04G024410"/>
</dbReference>
<dbReference type="HOGENOM" id="CLU_044409_1_0_1"/>
<dbReference type="OMA" id="RFYETNF"/>
<dbReference type="OrthoDB" id="541710at2759"/>
<dbReference type="UniPathway" id="UPA00378"/>
<dbReference type="Proteomes" id="UP000007015">
    <property type="component" value="Chromosome 4"/>
</dbReference>
<dbReference type="GO" id="GO:0005783">
    <property type="term" value="C:endoplasmic reticulum"/>
    <property type="evidence" value="ECO:0007669"/>
    <property type="project" value="TreeGrafter"/>
</dbReference>
<dbReference type="GO" id="GO:0005886">
    <property type="term" value="C:plasma membrane"/>
    <property type="evidence" value="ECO:0007669"/>
    <property type="project" value="UniProtKB-SubCell"/>
</dbReference>
<dbReference type="GO" id="GO:0003865">
    <property type="term" value="F:3-oxo-5-alpha-steroid 4-dehydrogenase activity"/>
    <property type="evidence" value="ECO:0007669"/>
    <property type="project" value="TreeGrafter"/>
</dbReference>
<dbReference type="GO" id="GO:0160198">
    <property type="term" value="F:polyprenal reductase activity"/>
    <property type="evidence" value="ECO:0000250"/>
    <property type="project" value="UniProtKB"/>
</dbReference>
<dbReference type="GO" id="GO:0019408">
    <property type="term" value="P:dolichol biosynthetic process"/>
    <property type="evidence" value="ECO:0000250"/>
    <property type="project" value="UniProtKB"/>
</dbReference>
<dbReference type="GO" id="GO:0006488">
    <property type="term" value="P:dolichol-linked oligosaccharide biosynthetic process"/>
    <property type="evidence" value="ECO:0007669"/>
    <property type="project" value="InterPro"/>
</dbReference>
<dbReference type="GO" id="GO:0016095">
    <property type="term" value="P:polyprenol catabolic process"/>
    <property type="evidence" value="ECO:0007669"/>
    <property type="project" value="TreeGrafter"/>
</dbReference>
<dbReference type="FunFam" id="1.20.120.1630:FF:000012">
    <property type="entry name" value="Polyprenol reductase 1"/>
    <property type="match status" value="1"/>
</dbReference>
<dbReference type="Gene3D" id="1.20.120.1630">
    <property type="match status" value="1"/>
</dbReference>
<dbReference type="InterPro" id="IPR001104">
    <property type="entry name" value="3-oxo-5_a-steroid_4-DH_C"/>
</dbReference>
<dbReference type="InterPro" id="IPR039698">
    <property type="entry name" value="Dfg10/SRD5A3"/>
</dbReference>
<dbReference type="PANTHER" id="PTHR14624">
    <property type="entry name" value="DFG10 PROTEIN"/>
    <property type="match status" value="1"/>
</dbReference>
<dbReference type="PANTHER" id="PTHR14624:SF0">
    <property type="entry name" value="POLYPRENOL REDUCTASE"/>
    <property type="match status" value="1"/>
</dbReference>
<dbReference type="Pfam" id="PF02544">
    <property type="entry name" value="Steroid_dh"/>
    <property type="match status" value="1"/>
</dbReference>
<dbReference type="PROSITE" id="PS50244">
    <property type="entry name" value="S5A_REDUCTASE"/>
    <property type="match status" value="1"/>
</dbReference>